<accession>Q97IC1</accession>
<keyword id="KW-0963">Cytoplasm</keyword>
<keyword id="KW-0342">GTP-binding</keyword>
<keyword id="KW-0378">Hydrolase</keyword>
<keyword id="KW-0479">Metal-binding</keyword>
<keyword id="KW-0547">Nucleotide-binding</keyword>
<keyword id="KW-1185">Reference proteome</keyword>
<keyword id="KW-0690">Ribosome biogenesis</keyword>
<keyword id="KW-0694">RNA-binding</keyword>
<keyword id="KW-0699">rRNA-binding</keyword>
<keyword id="KW-0862">Zinc</keyword>
<evidence type="ECO:0000255" key="1">
    <source>
        <dbReference type="HAMAP-Rule" id="MF_01820"/>
    </source>
</evidence>
<evidence type="ECO:0000255" key="2">
    <source>
        <dbReference type="PROSITE-ProRule" id="PRU01058"/>
    </source>
</evidence>
<name>RSGA_CLOAB</name>
<organism>
    <name type="scientific">Clostridium acetobutylicum (strain ATCC 824 / DSM 792 / JCM 1419 / IAM 19013 / LMG 5710 / NBRC 13948 / NRRL B-527 / VKM B-1787 / 2291 / W)</name>
    <dbReference type="NCBI Taxonomy" id="272562"/>
    <lineage>
        <taxon>Bacteria</taxon>
        <taxon>Bacillati</taxon>
        <taxon>Bacillota</taxon>
        <taxon>Clostridia</taxon>
        <taxon>Eubacteriales</taxon>
        <taxon>Clostridiaceae</taxon>
        <taxon>Clostridium</taxon>
    </lineage>
</organism>
<gene>
    <name evidence="1" type="primary">rsgA</name>
    <name type="ordered locus">CA_C1729</name>
</gene>
<feature type="chain" id="PRO_0000171472" description="Small ribosomal subunit biogenesis GTPase RsgA">
    <location>
        <begin position="1"/>
        <end position="288"/>
    </location>
</feature>
<feature type="domain" description="CP-type G" evidence="2">
    <location>
        <begin position="61"/>
        <end position="218"/>
    </location>
</feature>
<feature type="binding site" evidence="1">
    <location>
        <begin position="110"/>
        <end position="113"/>
    </location>
    <ligand>
        <name>GTP</name>
        <dbReference type="ChEBI" id="CHEBI:37565"/>
    </ligand>
</feature>
<feature type="binding site" evidence="1">
    <location>
        <begin position="161"/>
        <end position="169"/>
    </location>
    <ligand>
        <name>GTP</name>
        <dbReference type="ChEBI" id="CHEBI:37565"/>
    </ligand>
</feature>
<feature type="binding site" evidence="1">
    <location>
        <position position="242"/>
    </location>
    <ligand>
        <name>Zn(2+)</name>
        <dbReference type="ChEBI" id="CHEBI:29105"/>
    </ligand>
</feature>
<feature type="binding site" evidence="1">
    <location>
        <position position="247"/>
    </location>
    <ligand>
        <name>Zn(2+)</name>
        <dbReference type="ChEBI" id="CHEBI:29105"/>
    </ligand>
</feature>
<feature type="binding site" evidence="1">
    <location>
        <position position="249"/>
    </location>
    <ligand>
        <name>Zn(2+)</name>
        <dbReference type="ChEBI" id="CHEBI:29105"/>
    </ligand>
</feature>
<feature type="binding site" evidence="1">
    <location>
        <position position="255"/>
    </location>
    <ligand>
        <name>Zn(2+)</name>
        <dbReference type="ChEBI" id="CHEBI:29105"/>
    </ligand>
</feature>
<comment type="function">
    <text evidence="1">One of several proteins that assist in the late maturation steps of the functional core of the 30S ribosomal subunit. Helps release RbfA from mature subunits. May play a role in the assembly of ribosomal proteins into the subunit. Circularly permuted GTPase that catalyzes slow GTP hydrolysis, GTPase activity is stimulated by the 30S ribosomal subunit.</text>
</comment>
<comment type="cofactor">
    <cofactor evidence="1">
        <name>Zn(2+)</name>
        <dbReference type="ChEBI" id="CHEBI:29105"/>
    </cofactor>
    <text evidence="1">Binds 1 zinc ion per subunit.</text>
</comment>
<comment type="subunit">
    <text evidence="1">Monomer. Associates with 30S ribosomal subunit, binds 16S rRNA.</text>
</comment>
<comment type="subcellular location">
    <subcellularLocation>
        <location evidence="1">Cytoplasm</location>
    </subcellularLocation>
</comment>
<comment type="similarity">
    <text evidence="1">Belongs to the TRAFAC class YlqF/YawG GTPase family. RsgA subfamily.</text>
</comment>
<dbReference type="EC" id="3.6.1.-" evidence="1"/>
<dbReference type="EMBL" id="AE001437">
    <property type="protein sequence ID" value="AAK79695.1"/>
    <property type="molecule type" value="Genomic_DNA"/>
</dbReference>
<dbReference type="PIR" id="D97113">
    <property type="entry name" value="D97113"/>
</dbReference>
<dbReference type="RefSeq" id="NP_348355.1">
    <property type="nucleotide sequence ID" value="NC_003030.1"/>
</dbReference>
<dbReference type="RefSeq" id="WP_010965036.1">
    <property type="nucleotide sequence ID" value="NC_003030.1"/>
</dbReference>
<dbReference type="SMR" id="Q97IC1"/>
<dbReference type="STRING" id="272562.CA_C1729"/>
<dbReference type="KEGG" id="cac:CA_C1729"/>
<dbReference type="PATRIC" id="fig|272562.8.peg.1931"/>
<dbReference type="eggNOG" id="COG1162">
    <property type="taxonomic scope" value="Bacteria"/>
</dbReference>
<dbReference type="HOGENOM" id="CLU_033617_2_1_9"/>
<dbReference type="OrthoDB" id="9809485at2"/>
<dbReference type="Proteomes" id="UP000000814">
    <property type="component" value="Chromosome"/>
</dbReference>
<dbReference type="GO" id="GO:0005737">
    <property type="term" value="C:cytoplasm"/>
    <property type="evidence" value="ECO:0007669"/>
    <property type="project" value="UniProtKB-SubCell"/>
</dbReference>
<dbReference type="GO" id="GO:0005525">
    <property type="term" value="F:GTP binding"/>
    <property type="evidence" value="ECO:0007669"/>
    <property type="project" value="UniProtKB-UniRule"/>
</dbReference>
<dbReference type="GO" id="GO:0003924">
    <property type="term" value="F:GTPase activity"/>
    <property type="evidence" value="ECO:0007669"/>
    <property type="project" value="UniProtKB-UniRule"/>
</dbReference>
<dbReference type="GO" id="GO:0046872">
    <property type="term" value="F:metal ion binding"/>
    <property type="evidence" value="ECO:0007669"/>
    <property type="project" value="UniProtKB-KW"/>
</dbReference>
<dbReference type="GO" id="GO:0019843">
    <property type="term" value="F:rRNA binding"/>
    <property type="evidence" value="ECO:0007669"/>
    <property type="project" value="UniProtKB-KW"/>
</dbReference>
<dbReference type="GO" id="GO:0042274">
    <property type="term" value="P:ribosomal small subunit biogenesis"/>
    <property type="evidence" value="ECO:0007669"/>
    <property type="project" value="UniProtKB-UniRule"/>
</dbReference>
<dbReference type="CDD" id="cd04466">
    <property type="entry name" value="S1_YloQ_GTPase"/>
    <property type="match status" value="1"/>
</dbReference>
<dbReference type="CDD" id="cd01854">
    <property type="entry name" value="YjeQ_EngC"/>
    <property type="match status" value="1"/>
</dbReference>
<dbReference type="Gene3D" id="2.40.50.140">
    <property type="entry name" value="Nucleic acid-binding proteins"/>
    <property type="match status" value="1"/>
</dbReference>
<dbReference type="Gene3D" id="3.40.50.300">
    <property type="entry name" value="P-loop containing nucleotide triphosphate hydrolases"/>
    <property type="match status" value="1"/>
</dbReference>
<dbReference type="Gene3D" id="1.10.40.50">
    <property type="entry name" value="Probable gtpase engc, domain 3"/>
    <property type="match status" value="1"/>
</dbReference>
<dbReference type="HAMAP" id="MF_01820">
    <property type="entry name" value="GTPase_RsgA"/>
    <property type="match status" value="1"/>
</dbReference>
<dbReference type="InterPro" id="IPR030378">
    <property type="entry name" value="G_CP_dom"/>
</dbReference>
<dbReference type="InterPro" id="IPR012340">
    <property type="entry name" value="NA-bd_OB-fold"/>
</dbReference>
<dbReference type="InterPro" id="IPR027417">
    <property type="entry name" value="P-loop_NTPase"/>
</dbReference>
<dbReference type="InterPro" id="IPR004881">
    <property type="entry name" value="Ribosome_biogen_GTPase_RsgA"/>
</dbReference>
<dbReference type="InterPro" id="IPR010914">
    <property type="entry name" value="RsgA_GTPase_dom"/>
</dbReference>
<dbReference type="InterPro" id="IPR031944">
    <property type="entry name" value="RsgA_N"/>
</dbReference>
<dbReference type="NCBIfam" id="TIGR00157">
    <property type="entry name" value="ribosome small subunit-dependent GTPase A"/>
    <property type="match status" value="1"/>
</dbReference>
<dbReference type="PANTHER" id="PTHR32120">
    <property type="entry name" value="SMALL RIBOSOMAL SUBUNIT BIOGENESIS GTPASE RSGA"/>
    <property type="match status" value="1"/>
</dbReference>
<dbReference type="PANTHER" id="PTHR32120:SF11">
    <property type="entry name" value="SMALL RIBOSOMAL SUBUNIT BIOGENESIS GTPASE RSGA 1, MITOCHONDRIAL-RELATED"/>
    <property type="match status" value="1"/>
</dbReference>
<dbReference type="Pfam" id="PF03193">
    <property type="entry name" value="RsgA_GTPase"/>
    <property type="match status" value="1"/>
</dbReference>
<dbReference type="Pfam" id="PF16745">
    <property type="entry name" value="RsgA_N"/>
    <property type="match status" value="1"/>
</dbReference>
<dbReference type="SUPFAM" id="SSF50249">
    <property type="entry name" value="Nucleic acid-binding proteins"/>
    <property type="match status" value="1"/>
</dbReference>
<dbReference type="SUPFAM" id="SSF52540">
    <property type="entry name" value="P-loop containing nucleoside triphosphate hydrolases"/>
    <property type="match status" value="1"/>
</dbReference>
<dbReference type="PROSITE" id="PS50936">
    <property type="entry name" value="ENGC_GTPASE"/>
    <property type="match status" value="1"/>
</dbReference>
<dbReference type="PROSITE" id="PS51721">
    <property type="entry name" value="G_CP"/>
    <property type="match status" value="1"/>
</dbReference>
<sequence>MQGIIIKGIAGFYYVKVEEEIYECKARGKFRLGELSPIVGDKVDITVINGKGVIEKIHPRTNKLIRPPVSNVTQAFIVFSIVNPEFSSDLLNKFLILCEFNNIKVKVCINKIDLVNEELLTPIKNLLNNTGYELKFLNAKSKIGINELKESLKDNITVVCGPSGVGKSTLMNSIAGSNVMKTGDISEKLKRGKNTTRHSELIEVAGGFIVDTPGFSSLDLNFIDRYELKDLFPEFYEYNGSCKYSTCVHDKEPGCEVKKAVEEGNINIERYNFYVDTLNKLSVRRNYK</sequence>
<protein>
    <recommendedName>
        <fullName evidence="1">Small ribosomal subunit biogenesis GTPase RsgA</fullName>
        <ecNumber evidence="1">3.6.1.-</ecNumber>
    </recommendedName>
</protein>
<proteinExistence type="inferred from homology"/>
<reference key="1">
    <citation type="journal article" date="2001" name="J. Bacteriol.">
        <title>Genome sequence and comparative analysis of the solvent-producing bacterium Clostridium acetobutylicum.</title>
        <authorList>
            <person name="Noelling J."/>
            <person name="Breton G."/>
            <person name="Omelchenko M.V."/>
            <person name="Makarova K.S."/>
            <person name="Zeng Q."/>
            <person name="Gibson R."/>
            <person name="Lee H.M."/>
            <person name="Dubois J."/>
            <person name="Qiu D."/>
            <person name="Hitti J."/>
            <person name="Wolf Y.I."/>
            <person name="Tatusov R.L."/>
            <person name="Sabathe F."/>
            <person name="Doucette-Stamm L.A."/>
            <person name="Soucaille P."/>
            <person name="Daly M.J."/>
            <person name="Bennett G.N."/>
            <person name="Koonin E.V."/>
            <person name="Smith D.R."/>
        </authorList>
    </citation>
    <scope>NUCLEOTIDE SEQUENCE [LARGE SCALE GENOMIC DNA]</scope>
    <source>
        <strain>ATCC 824 / DSM 792 / JCM 1419 / IAM 19013 / LMG 5710 / NBRC 13948 / NRRL B-527 / VKM B-1787 / 2291 / W</strain>
    </source>
</reference>